<gene>
    <name evidence="2" type="primary">HA</name>
</gene>
<dbReference type="EMBL" id="M38353">
    <property type="protein sequence ID" value="AAA43172.1"/>
    <property type="molecule type" value="Genomic_RNA"/>
</dbReference>
<dbReference type="PDB" id="1RUY">
    <property type="method" value="X-ray"/>
    <property type="resolution" value="2.70 A"/>
    <property type="chains" value="I/K/M=345-504"/>
</dbReference>
<dbReference type="PDBsum" id="1RUY"/>
<dbReference type="SMR" id="P18875"/>
<dbReference type="GlyCosmos" id="P18875">
    <property type="glycosylation" value="10 sites, No reported glycans"/>
</dbReference>
<dbReference type="EvolutionaryTrace" id="P18875"/>
<dbReference type="GO" id="GO:0020002">
    <property type="term" value="C:host cell plasma membrane"/>
    <property type="evidence" value="ECO:0007669"/>
    <property type="project" value="UniProtKB-SubCell"/>
</dbReference>
<dbReference type="GO" id="GO:0016020">
    <property type="term" value="C:membrane"/>
    <property type="evidence" value="ECO:0007669"/>
    <property type="project" value="UniProtKB-UniRule"/>
</dbReference>
<dbReference type="GO" id="GO:0019031">
    <property type="term" value="C:viral envelope"/>
    <property type="evidence" value="ECO:0007669"/>
    <property type="project" value="UniProtKB-UniRule"/>
</dbReference>
<dbReference type="GO" id="GO:0055036">
    <property type="term" value="C:virion membrane"/>
    <property type="evidence" value="ECO:0007669"/>
    <property type="project" value="UniProtKB-SubCell"/>
</dbReference>
<dbReference type="GO" id="GO:0046789">
    <property type="term" value="F:host cell surface receptor binding"/>
    <property type="evidence" value="ECO:0007669"/>
    <property type="project" value="UniProtKB-UniRule"/>
</dbReference>
<dbReference type="GO" id="GO:0075512">
    <property type="term" value="P:clathrin-dependent endocytosis of virus by host cell"/>
    <property type="evidence" value="ECO:0007669"/>
    <property type="project" value="UniProtKB-UniRule"/>
</dbReference>
<dbReference type="GO" id="GO:0039654">
    <property type="term" value="P:fusion of virus membrane with host endosome membrane"/>
    <property type="evidence" value="ECO:0007669"/>
    <property type="project" value="UniProtKB-UniRule"/>
</dbReference>
<dbReference type="GO" id="GO:0019064">
    <property type="term" value="P:fusion of virus membrane with host plasma membrane"/>
    <property type="evidence" value="ECO:0007669"/>
    <property type="project" value="InterPro"/>
</dbReference>
<dbReference type="GO" id="GO:0046761">
    <property type="term" value="P:viral budding from plasma membrane"/>
    <property type="evidence" value="ECO:0007669"/>
    <property type="project" value="UniProtKB-UniRule"/>
</dbReference>
<dbReference type="GO" id="GO:0019062">
    <property type="term" value="P:virion attachment to host cell"/>
    <property type="evidence" value="ECO:0007669"/>
    <property type="project" value="UniProtKB-KW"/>
</dbReference>
<dbReference type="FunFam" id="3.90.20.10:FF:000002">
    <property type="entry name" value="Hemagglutinin"/>
    <property type="match status" value="1"/>
</dbReference>
<dbReference type="Gene3D" id="3.90.20.10">
    <property type="match status" value="1"/>
</dbReference>
<dbReference type="Gene3D" id="3.90.209.20">
    <property type="match status" value="1"/>
</dbReference>
<dbReference type="Gene3D" id="2.10.77.10">
    <property type="entry name" value="Hemagglutinin Chain A, Domain 2"/>
    <property type="match status" value="1"/>
</dbReference>
<dbReference type="HAMAP" id="MF_04072">
    <property type="entry name" value="INFV_HEMA"/>
    <property type="match status" value="1"/>
</dbReference>
<dbReference type="InterPro" id="IPR008980">
    <property type="entry name" value="Capsid_hemagglutn"/>
</dbReference>
<dbReference type="InterPro" id="IPR013828">
    <property type="entry name" value="Hemagglutn_HA1_a/b_dom_sf"/>
</dbReference>
<dbReference type="InterPro" id="IPR000149">
    <property type="entry name" value="Hemagglutn_influenz_A"/>
</dbReference>
<dbReference type="InterPro" id="IPR001364">
    <property type="entry name" value="Hemagglutn_influenz_A/B"/>
</dbReference>
<dbReference type="Pfam" id="PF00509">
    <property type="entry name" value="Hemagglutinin"/>
    <property type="match status" value="1"/>
</dbReference>
<dbReference type="PRINTS" id="PR00330">
    <property type="entry name" value="HEMAGGLUTN1"/>
</dbReference>
<dbReference type="PRINTS" id="PR00329">
    <property type="entry name" value="HEMAGGLUTN12"/>
</dbReference>
<dbReference type="SUPFAM" id="SSF58064">
    <property type="entry name" value="Influenza hemagglutinin (stalk)"/>
    <property type="match status" value="1"/>
</dbReference>
<dbReference type="SUPFAM" id="SSF49818">
    <property type="entry name" value="Viral protein domain"/>
    <property type="match status" value="1"/>
</dbReference>
<name>HEMA_I79A4</name>
<evidence type="ECO:0000250" key="1">
    <source>
        <dbReference type="UniProtKB" id="Q289M7"/>
    </source>
</evidence>
<evidence type="ECO:0000255" key="2">
    <source>
        <dbReference type="HAMAP-Rule" id="MF_04072"/>
    </source>
</evidence>
<evidence type="ECO:0000305" key="3"/>
<evidence type="ECO:0007829" key="4">
    <source>
        <dbReference type="PDB" id="1RUY"/>
    </source>
</evidence>
<sequence>MKAKLLVLLCALSATDADTICIGYHANNSTDTVDTVLEKNVTVTHSVNLLEDSHNGKLCRLKGIAPLQLGKCSIAGWILGNPECESLFSKKSWSYIAETPNSENGTCYPGYFADYEELREQLSSVSSFERFEIFPKERSWPKHNVTRGVTASCSHKGKSSFYRNLLWLTEKNGSYPNLSKSYVNNKEKEVLVLWGVHHPSNIEDQKTIYRKENAYVSVVSSNYNRRFTPEIAKRPKVRGQEGRINYYWTLLEPGDTIIFEANGNLIAPWYAFALSRGFGSGIITSNASMDECDTKCQTPQGAINSSLPFQNVHPVTIGECPKYVRSTKLRMVTGLRNIPSIQSRGLFGAIAGFIEGGWTGMIDGWYGYHHQNEQGSGYAADQKSTQNAINGITNKVNSVIEKMNTQFTAVGKEFNKLEKRMENLNKKVDDGFLDIWTYNAELLVLLENERTLDFHDSNVKNLYEKVKSQLKNNAKEIGNGCFEFYHKCNNECMESVKNGTYDYPKYSEESKLNREKIDGVKLESMGVYQILAIYSTVASSLCLLVSLGAISFWMCSNGSLQCRICI</sequence>
<feature type="signal peptide" evidence="2">
    <location>
        <begin position="1"/>
        <end position="17"/>
    </location>
</feature>
<feature type="chain" id="PRO_0000440479" description="Hemagglutinin" evidence="2">
    <location>
        <begin position="18"/>
        <end position="566"/>
    </location>
</feature>
<feature type="chain" id="PRO_0000039012" description="Hemagglutinin HA1 chain" evidence="2">
    <location>
        <begin position="18"/>
        <end position="343"/>
    </location>
</feature>
<feature type="chain" id="PRO_0000039013" description="Hemagglutinin HA2 chain" evidence="2">
    <location>
        <begin position="345"/>
        <end position="566"/>
    </location>
</feature>
<feature type="topological domain" description="Extracellular" evidence="2">
    <location>
        <begin position="18"/>
        <end position="529"/>
    </location>
</feature>
<feature type="transmembrane region" description="Helical" evidence="2">
    <location>
        <begin position="530"/>
        <end position="550"/>
    </location>
</feature>
<feature type="topological domain" description="Cytoplasmic" evidence="2">
    <location>
        <begin position="551"/>
        <end position="566"/>
    </location>
</feature>
<feature type="site" description="Cleavage; by host" evidence="2">
    <location>
        <begin position="344"/>
        <end position="345"/>
    </location>
</feature>
<feature type="lipid moiety-binding region" description="S-palmitoyl cysteine; by host" evidence="2">
    <location>
        <position position="555"/>
    </location>
</feature>
<feature type="lipid moiety-binding region" description="S-palmitoyl cysteine; by host" evidence="2">
    <location>
        <position position="562"/>
    </location>
</feature>
<feature type="lipid moiety-binding region" description="S-palmitoyl cysteine; by host" evidence="2">
    <location>
        <position position="565"/>
    </location>
</feature>
<feature type="glycosylation site" description="N-linked (GlcNAc...) asparagine; by host" evidence="2">
    <location>
        <position position="27"/>
    </location>
</feature>
<feature type="glycosylation site" description="N-linked (GlcNAc...) asparagine; by host" evidence="2">
    <location>
        <position position="28"/>
    </location>
</feature>
<feature type="glycosylation site" description="N-linked (GlcNAc...) asparagine; by host" evidence="2">
    <location>
        <position position="40"/>
    </location>
</feature>
<feature type="glycosylation site" description="N-linked (GlcNAc...) asparagine; by host" evidence="2">
    <location>
        <position position="104"/>
    </location>
</feature>
<feature type="glycosylation site" description="N-linked (GlcNAc...) asparagine; by host" evidence="2">
    <location>
        <position position="144"/>
    </location>
</feature>
<feature type="glycosylation site" description="N-linked (GlcNAc...) asparagine; by host" evidence="2">
    <location>
        <position position="172"/>
    </location>
</feature>
<feature type="glycosylation site" description="N-linked (GlcNAc...) asparagine; by host" evidence="2">
    <location>
        <position position="177"/>
    </location>
</feature>
<feature type="glycosylation site" description="N-linked (GlcNAc...) asparagine; by host" evidence="2">
    <location>
        <position position="286"/>
    </location>
</feature>
<feature type="glycosylation site" description="N-linked (GlcNAc...) asparagine; by host" evidence="2">
    <location>
        <position position="304"/>
    </location>
</feature>
<feature type="glycosylation site" description="N-linked (GlcNAc...) asparagine; by host" evidence="2">
    <location>
        <position position="498"/>
    </location>
</feature>
<feature type="disulfide bond" description="Interchain (between HA1 and HA2 chains)" evidence="2">
    <location>
        <begin position="21"/>
        <end position="481"/>
    </location>
</feature>
<feature type="disulfide bond" evidence="2">
    <location>
        <begin position="59"/>
        <end position="292"/>
    </location>
</feature>
<feature type="disulfide bond" evidence="2">
    <location>
        <begin position="72"/>
        <end position="84"/>
    </location>
</feature>
<feature type="disulfide bond" evidence="2">
    <location>
        <begin position="107"/>
        <end position="153"/>
    </location>
</feature>
<feature type="disulfide bond" evidence="2">
    <location>
        <begin position="296"/>
        <end position="320"/>
    </location>
</feature>
<feature type="disulfide bond" evidence="2">
    <location>
        <begin position="488"/>
        <end position="492"/>
    </location>
</feature>
<feature type="turn" evidence="4">
    <location>
        <begin position="351"/>
        <end position="353"/>
    </location>
</feature>
<feature type="strand" evidence="4">
    <location>
        <begin position="365"/>
        <end position="368"/>
    </location>
</feature>
<feature type="helix" evidence="4">
    <location>
        <begin position="382"/>
        <end position="402"/>
    </location>
</feature>
<feature type="helix" evidence="4">
    <location>
        <begin position="419"/>
        <end position="470"/>
    </location>
</feature>
<feature type="strand" evidence="4">
    <location>
        <begin position="473"/>
        <end position="478"/>
    </location>
</feature>
<feature type="strand" evidence="4">
    <location>
        <begin position="481"/>
        <end position="486"/>
    </location>
</feature>
<feature type="helix" evidence="4">
    <location>
        <begin position="490"/>
        <end position="497"/>
    </location>
</feature>
<protein>
    <recommendedName>
        <fullName evidence="2">Hemagglutinin</fullName>
    </recommendedName>
    <component>
        <recommendedName>
            <fullName evidence="2">Hemagglutinin HA1 chain</fullName>
        </recommendedName>
    </component>
    <component>
        <recommendedName>
            <fullName evidence="2">Hemagglutinin HA2 chain</fullName>
        </recommendedName>
    </component>
</protein>
<organism>
    <name type="scientific">Influenza A virus (strain A/Kiev/59/1979 H1N1)</name>
    <dbReference type="NCBI Taxonomy" id="384495"/>
    <lineage>
        <taxon>Viruses</taxon>
        <taxon>Riboviria</taxon>
        <taxon>Orthornavirae</taxon>
        <taxon>Negarnaviricota</taxon>
        <taxon>Polyploviricotina</taxon>
        <taxon>Insthoviricetes</taxon>
        <taxon>Articulavirales</taxon>
        <taxon>Orthomyxoviridae</taxon>
        <taxon>Alphainfluenzavirus</taxon>
        <taxon>Alphainfluenzavirus influenzae</taxon>
        <taxon>Influenza A virus</taxon>
    </lineage>
</organism>
<comment type="function">
    <text>Binds to sialic acid-containing receptors on the cell surface, bringing about the attachment of the virus particle to the cell. This attachment induces virion internalization of about two third of the virus particles through clathrin-dependent endocytosis and about one third through a clathrin- and caveolin-independent pathway. Plays a major role in the determination of host range restriction and virulence. Class I viral fusion protein. Responsible for penetration of the virus into the cell cytoplasm by mediating the fusion of the membrane of the endocytosed virus particle with the endosomal membrane. Low pH in endosomes induces an irreversible conformational change in HA2, releasing the fusion hydrophobic peptide. Several trimers are required to form a competent fusion pore.</text>
</comment>
<comment type="function">
    <text evidence="2">Binds to sialic acid-containing receptors on the cell surface, bringing about the attachment of the virus particle to the cell. This attachment induces virion internalization either through clathrin-dependent endocytosis or through clathrin- and caveolin-independent pathway. Plays a major role in the determination of host range restriction and virulence. Class I viral fusion protein. Responsible for penetration of the virus into the cell cytoplasm by mediating the fusion of the membrane of the endocytosed virus particle with the endosomal membrane. Low pH in endosomes induces an irreversible conformational change in HA2, releasing the fusion hydrophobic peptide. Several trimers are required to form a competent fusion pore.</text>
</comment>
<comment type="subunit">
    <text evidence="1">Homotrimer of disulfide-linked HA1-HA2. Interacts with human CACNA1C.</text>
</comment>
<comment type="subcellular location">
    <subcellularLocation>
        <location evidence="2">Virion membrane</location>
        <topology evidence="2">Single-pass type I membrane protein</topology>
    </subcellularLocation>
    <subcellularLocation>
        <location evidence="2">Host apical cell membrane</location>
        <topology evidence="2">Single-pass type I membrane protein</topology>
    </subcellularLocation>
    <text evidence="2">Targeted to the apical plasma membrane in epithelial polarized cells through a signal present in the transmembrane domain. Associated with glycosphingolipid- and cholesterol-enriched detergent-resistant lipid rafts.</text>
</comment>
<comment type="PTM">
    <text evidence="2">Palmitoylated.</text>
</comment>
<comment type="PTM">
    <text evidence="2">In natural infection, inactive HA is matured into HA1 and HA2 outside the cell by one or more trypsin-like, arginine-specific endoprotease secreted by the bronchial epithelial cells. One identified protease that may be involved in this process is secreted in lungs by club cells.</text>
</comment>
<comment type="miscellaneous">
    <text>Major glycoprotein, comprises over 80% of the envelope proteins present in virus particle.</text>
</comment>
<comment type="miscellaneous">
    <text>The extent of infection into host organism is determined by HA. Influenza viruses bud from the apical surface of polarized epithelial cells (e.g. bronchial epithelial cells) into lumen of lungs and are therefore usually pneumotropic. The reason is that HA is cleaved by tryptase clara which is restricted to lungs. However, HAs of H5 and H7 pantropic avian viruses subtypes can be cleaved by furin and subtilisin-type enzymes, allowing the virus to grow in other organs than lungs.</text>
</comment>
<comment type="miscellaneous">
    <text evidence="3">The influenza A genome consist of 8 RNA segments. Genetic variation of hemagglutinin and/or neuraminidase genes results in the emergence of new influenza strains. The mechanism of variation can be the result of point mutations or the result of genetic reassortment between segments of two different strains.</text>
</comment>
<comment type="similarity">
    <text evidence="2">Belongs to the influenza viruses hemagglutinin family.</text>
</comment>
<accession>P18875</accession>
<reference key="1">
    <citation type="journal article" date="1986" name="Bioorg. Khim.">
        <title>Primary structure of the full-size DNA copy of the hemagglutinin gene of influenza virus A/Kiev/59/79 (H1N1).</title>
        <authorList>
            <person name="Beklemishev A.B."/>
            <person name="Blinov V.M."/>
            <person name="Vasilenko S.K."/>
            <person name="Golovin S.Y."/>
            <person name="Karginov V.A."/>
            <person name="Mamayev L.V."/>
        </authorList>
    </citation>
    <scope>NUCLEOTIDE SEQUENCE [GENOMIC RNA]</scope>
</reference>
<organismHost>
    <name type="scientific">Aves</name>
    <dbReference type="NCBI Taxonomy" id="8782"/>
</organismHost>
<organismHost>
    <name type="scientific">Homo sapiens</name>
    <name type="common">Human</name>
    <dbReference type="NCBI Taxonomy" id="9606"/>
</organismHost>
<organismHost>
    <name type="scientific">Sus scrofa</name>
    <name type="common">Pig</name>
    <dbReference type="NCBI Taxonomy" id="9823"/>
</organismHost>
<keyword id="KW-0002">3D-structure</keyword>
<keyword id="KW-1167">Clathrin- and caveolin-independent endocytosis of virus by host</keyword>
<keyword id="KW-1165">Clathrin-mediated endocytosis of virus by host</keyword>
<keyword id="KW-1015">Disulfide bond</keyword>
<keyword id="KW-1170">Fusion of virus membrane with host endosomal membrane</keyword>
<keyword id="KW-1168">Fusion of virus membrane with host membrane</keyword>
<keyword id="KW-0325">Glycoprotein</keyword>
<keyword id="KW-0348">Hemagglutinin</keyword>
<keyword id="KW-1032">Host cell membrane</keyword>
<keyword id="KW-1043">Host membrane</keyword>
<keyword id="KW-0945">Host-virus interaction</keyword>
<keyword id="KW-0449">Lipoprotein</keyword>
<keyword id="KW-0472">Membrane</keyword>
<keyword id="KW-0564">Palmitate</keyword>
<keyword id="KW-0732">Signal</keyword>
<keyword id="KW-0812">Transmembrane</keyword>
<keyword id="KW-1133">Transmembrane helix</keyword>
<keyword id="KW-1161">Viral attachment to host cell</keyword>
<keyword id="KW-0261">Viral envelope protein</keyword>
<keyword id="KW-1162">Viral penetration into host cytoplasm</keyword>
<keyword id="KW-0946">Virion</keyword>
<keyword id="KW-1164">Virus endocytosis by host</keyword>
<keyword id="KW-1160">Virus entry into host cell</keyword>
<proteinExistence type="evidence at protein level"/>